<accession>B7UII2</accession>
<sequence length="264" mass="28165">MKPTTIASLQKCKQDKKRFATITAYDYSFAKLFAEEGLNVMLVGDSLGMTVQGHDSTLPVTVADIAYHTAAVRRGAPNCLLLADLPFMAYATPEQAFENAATVMRAGANMVKIEGGEWLVETVQMLTERAVPVCGHLGLTPQSVNIFGGYKVQGRGDEASDQLLSDALALEAAGAQLLVLECVPVELAKRITEALAIPVIGIGAGNVTDGQILVMHDAFGITGGHIPKFAKNFLAETGDIRAAVRQYMAEVESGVYPGEEHSFH</sequence>
<dbReference type="EC" id="2.1.2.11" evidence="1"/>
<dbReference type="EMBL" id="FM180568">
    <property type="protein sequence ID" value="CAS07685.1"/>
    <property type="molecule type" value="Genomic_DNA"/>
</dbReference>
<dbReference type="RefSeq" id="WP_000805464.1">
    <property type="nucleotide sequence ID" value="NC_011601.1"/>
</dbReference>
<dbReference type="SMR" id="B7UII2"/>
<dbReference type="KEGG" id="ecg:E2348C_0137"/>
<dbReference type="HOGENOM" id="CLU_036645_1_0_6"/>
<dbReference type="UniPathway" id="UPA00028">
    <property type="reaction ID" value="UER00003"/>
</dbReference>
<dbReference type="Proteomes" id="UP000008205">
    <property type="component" value="Chromosome"/>
</dbReference>
<dbReference type="GO" id="GO:0005737">
    <property type="term" value="C:cytoplasm"/>
    <property type="evidence" value="ECO:0007669"/>
    <property type="project" value="UniProtKB-SubCell"/>
</dbReference>
<dbReference type="GO" id="GO:0003864">
    <property type="term" value="F:3-methyl-2-oxobutanoate hydroxymethyltransferase activity"/>
    <property type="evidence" value="ECO:0007669"/>
    <property type="project" value="UniProtKB-UniRule"/>
</dbReference>
<dbReference type="GO" id="GO:0000287">
    <property type="term" value="F:magnesium ion binding"/>
    <property type="evidence" value="ECO:0007669"/>
    <property type="project" value="TreeGrafter"/>
</dbReference>
<dbReference type="GO" id="GO:0015940">
    <property type="term" value="P:pantothenate biosynthetic process"/>
    <property type="evidence" value="ECO:0007669"/>
    <property type="project" value="UniProtKB-UniRule"/>
</dbReference>
<dbReference type="CDD" id="cd06557">
    <property type="entry name" value="KPHMT-like"/>
    <property type="match status" value="1"/>
</dbReference>
<dbReference type="FunFam" id="3.20.20.60:FF:000003">
    <property type="entry name" value="3-methyl-2-oxobutanoate hydroxymethyltransferase"/>
    <property type="match status" value="1"/>
</dbReference>
<dbReference type="Gene3D" id="3.20.20.60">
    <property type="entry name" value="Phosphoenolpyruvate-binding domains"/>
    <property type="match status" value="1"/>
</dbReference>
<dbReference type="HAMAP" id="MF_00156">
    <property type="entry name" value="PanB"/>
    <property type="match status" value="1"/>
</dbReference>
<dbReference type="InterPro" id="IPR003700">
    <property type="entry name" value="Pantoate_hydroxy_MeTrfase"/>
</dbReference>
<dbReference type="InterPro" id="IPR015813">
    <property type="entry name" value="Pyrv/PenolPyrv_kinase-like_dom"/>
</dbReference>
<dbReference type="InterPro" id="IPR040442">
    <property type="entry name" value="Pyrv_kinase-like_dom_sf"/>
</dbReference>
<dbReference type="NCBIfam" id="TIGR00222">
    <property type="entry name" value="panB"/>
    <property type="match status" value="1"/>
</dbReference>
<dbReference type="NCBIfam" id="NF001452">
    <property type="entry name" value="PRK00311.1"/>
    <property type="match status" value="1"/>
</dbReference>
<dbReference type="PANTHER" id="PTHR20881">
    <property type="entry name" value="3-METHYL-2-OXOBUTANOATE HYDROXYMETHYLTRANSFERASE"/>
    <property type="match status" value="1"/>
</dbReference>
<dbReference type="PANTHER" id="PTHR20881:SF0">
    <property type="entry name" value="3-METHYL-2-OXOBUTANOATE HYDROXYMETHYLTRANSFERASE"/>
    <property type="match status" value="1"/>
</dbReference>
<dbReference type="Pfam" id="PF02548">
    <property type="entry name" value="Pantoate_transf"/>
    <property type="match status" value="1"/>
</dbReference>
<dbReference type="PIRSF" id="PIRSF000388">
    <property type="entry name" value="Pantoate_hydroxy_MeTrfase"/>
    <property type="match status" value="1"/>
</dbReference>
<dbReference type="SUPFAM" id="SSF51621">
    <property type="entry name" value="Phosphoenolpyruvate/pyruvate domain"/>
    <property type="match status" value="1"/>
</dbReference>
<organism>
    <name type="scientific">Escherichia coli O127:H6 (strain E2348/69 / EPEC)</name>
    <dbReference type="NCBI Taxonomy" id="574521"/>
    <lineage>
        <taxon>Bacteria</taxon>
        <taxon>Pseudomonadati</taxon>
        <taxon>Pseudomonadota</taxon>
        <taxon>Gammaproteobacteria</taxon>
        <taxon>Enterobacterales</taxon>
        <taxon>Enterobacteriaceae</taxon>
        <taxon>Escherichia</taxon>
    </lineage>
</organism>
<evidence type="ECO:0000255" key="1">
    <source>
        <dbReference type="HAMAP-Rule" id="MF_00156"/>
    </source>
</evidence>
<proteinExistence type="inferred from homology"/>
<protein>
    <recommendedName>
        <fullName evidence="1">3-methyl-2-oxobutanoate hydroxymethyltransferase</fullName>
        <ecNumber evidence="1">2.1.2.11</ecNumber>
    </recommendedName>
    <alternativeName>
        <fullName evidence="1">Ketopantoate hydroxymethyltransferase</fullName>
        <shortName evidence="1">KPHMT</shortName>
    </alternativeName>
</protein>
<reference key="1">
    <citation type="journal article" date="2009" name="J. Bacteriol.">
        <title>Complete genome sequence and comparative genome analysis of enteropathogenic Escherichia coli O127:H6 strain E2348/69.</title>
        <authorList>
            <person name="Iguchi A."/>
            <person name="Thomson N.R."/>
            <person name="Ogura Y."/>
            <person name="Saunders D."/>
            <person name="Ooka T."/>
            <person name="Henderson I.R."/>
            <person name="Harris D."/>
            <person name="Asadulghani M."/>
            <person name="Kurokawa K."/>
            <person name="Dean P."/>
            <person name="Kenny B."/>
            <person name="Quail M.A."/>
            <person name="Thurston S."/>
            <person name="Dougan G."/>
            <person name="Hayashi T."/>
            <person name="Parkhill J."/>
            <person name="Frankel G."/>
        </authorList>
    </citation>
    <scope>NUCLEOTIDE SEQUENCE [LARGE SCALE GENOMIC DNA]</scope>
    <source>
        <strain>E2348/69 / EPEC</strain>
    </source>
</reference>
<keyword id="KW-0963">Cytoplasm</keyword>
<keyword id="KW-0460">Magnesium</keyword>
<keyword id="KW-0479">Metal-binding</keyword>
<keyword id="KW-0566">Pantothenate biosynthesis</keyword>
<keyword id="KW-1185">Reference proteome</keyword>
<keyword id="KW-0808">Transferase</keyword>
<gene>
    <name evidence="1" type="primary">panB</name>
    <name type="ordered locus">E2348C_0137</name>
</gene>
<comment type="function">
    <text evidence="1">Catalyzes the reversible reaction in which hydroxymethyl group from 5,10-methylenetetrahydrofolate is transferred onto alpha-ketoisovalerate to form ketopantoate.</text>
</comment>
<comment type="catalytic activity">
    <reaction evidence="1">
        <text>3-methyl-2-oxobutanoate + (6R)-5,10-methylene-5,6,7,8-tetrahydrofolate + H2O = 2-dehydropantoate + (6S)-5,6,7,8-tetrahydrofolate</text>
        <dbReference type="Rhea" id="RHEA:11824"/>
        <dbReference type="ChEBI" id="CHEBI:11561"/>
        <dbReference type="ChEBI" id="CHEBI:11851"/>
        <dbReference type="ChEBI" id="CHEBI:15377"/>
        <dbReference type="ChEBI" id="CHEBI:15636"/>
        <dbReference type="ChEBI" id="CHEBI:57453"/>
        <dbReference type="EC" id="2.1.2.11"/>
    </reaction>
</comment>
<comment type="cofactor">
    <cofactor evidence="1">
        <name>Mg(2+)</name>
        <dbReference type="ChEBI" id="CHEBI:18420"/>
    </cofactor>
    <text evidence="1">Binds 1 Mg(2+) ion per subunit.</text>
</comment>
<comment type="pathway">
    <text evidence="1">Cofactor biosynthesis; (R)-pantothenate biosynthesis; (R)-pantoate from 3-methyl-2-oxobutanoate: step 1/2.</text>
</comment>
<comment type="subunit">
    <text evidence="1">Homodecamer; pentamer of dimers.</text>
</comment>
<comment type="subcellular location">
    <subcellularLocation>
        <location evidence="1">Cytoplasm</location>
    </subcellularLocation>
</comment>
<comment type="similarity">
    <text evidence="1">Belongs to the PanB family.</text>
</comment>
<feature type="chain" id="PRO_1000123380" description="3-methyl-2-oxobutanoate hydroxymethyltransferase">
    <location>
        <begin position="1"/>
        <end position="264"/>
    </location>
</feature>
<feature type="active site" description="Proton acceptor" evidence="1">
    <location>
        <position position="181"/>
    </location>
</feature>
<feature type="binding site" evidence="1">
    <location>
        <begin position="45"/>
        <end position="46"/>
    </location>
    <ligand>
        <name>3-methyl-2-oxobutanoate</name>
        <dbReference type="ChEBI" id="CHEBI:11851"/>
    </ligand>
</feature>
<feature type="binding site" evidence="1">
    <location>
        <position position="45"/>
    </location>
    <ligand>
        <name>Mg(2+)</name>
        <dbReference type="ChEBI" id="CHEBI:18420"/>
    </ligand>
</feature>
<feature type="binding site" evidence="1">
    <location>
        <position position="84"/>
    </location>
    <ligand>
        <name>3-methyl-2-oxobutanoate</name>
        <dbReference type="ChEBI" id="CHEBI:11851"/>
    </ligand>
</feature>
<feature type="binding site" evidence="1">
    <location>
        <position position="84"/>
    </location>
    <ligand>
        <name>Mg(2+)</name>
        <dbReference type="ChEBI" id="CHEBI:18420"/>
    </ligand>
</feature>
<feature type="binding site" evidence="1">
    <location>
        <position position="112"/>
    </location>
    <ligand>
        <name>3-methyl-2-oxobutanoate</name>
        <dbReference type="ChEBI" id="CHEBI:11851"/>
    </ligand>
</feature>
<feature type="binding site" evidence="1">
    <location>
        <position position="114"/>
    </location>
    <ligand>
        <name>Mg(2+)</name>
        <dbReference type="ChEBI" id="CHEBI:18420"/>
    </ligand>
</feature>
<name>PANB_ECO27</name>